<organism>
    <name type="scientific">Rhizobium leguminosarum bv. trifolii (strain WSM2304)</name>
    <dbReference type="NCBI Taxonomy" id="395492"/>
    <lineage>
        <taxon>Bacteria</taxon>
        <taxon>Pseudomonadati</taxon>
        <taxon>Pseudomonadota</taxon>
        <taxon>Alphaproteobacteria</taxon>
        <taxon>Hyphomicrobiales</taxon>
        <taxon>Rhizobiaceae</taxon>
        <taxon>Rhizobium/Agrobacterium group</taxon>
        <taxon>Rhizobium</taxon>
    </lineage>
</organism>
<comment type="similarity">
    <text evidence="1">Belongs to the UPF0303 family.</text>
</comment>
<gene>
    <name type="ordered locus">Rleg2_2653</name>
</gene>
<reference key="1">
    <citation type="journal article" date="2010" name="Stand. Genomic Sci.">
        <title>Complete genome sequence of Rhizobium leguminosarum bv trifolii strain WSM2304, an effective microsymbiont of the South American clover Trifolium polymorphum.</title>
        <authorList>
            <person name="Reeve W."/>
            <person name="O'Hara G."/>
            <person name="Chain P."/>
            <person name="Ardley J."/>
            <person name="Brau L."/>
            <person name="Nandesena K."/>
            <person name="Tiwari R."/>
            <person name="Malfatti S."/>
            <person name="Kiss H."/>
            <person name="Lapidus A."/>
            <person name="Copeland A."/>
            <person name="Nolan M."/>
            <person name="Land M."/>
            <person name="Ivanova N."/>
            <person name="Mavromatis K."/>
            <person name="Markowitz V."/>
            <person name="Kyrpides N."/>
            <person name="Melino V."/>
            <person name="Denton M."/>
            <person name="Yates R."/>
            <person name="Howieson J."/>
        </authorList>
    </citation>
    <scope>NUCLEOTIDE SEQUENCE [LARGE SCALE GENOMIC DNA]</scope>
    <source>
        <strain>WSM2304</strain>
    </source>
</reference>
<sequence length="165" mass="17942">MTIEQDLSRIAEQEKALSFDAFDLTTAWQLGKLLQELATERGLGIAIDVTLHSMPVFYAALPGVTPDNVNWVRRKRNMVLRYFRSSYASGLKLSKDGKTVEDNGLSGADYAPHGGSFPINVKGTGCIGAVTVSGLPQRDDHNLAVEALALMLAKDLDTLRLDPPL</sequence>
<name>Y2653_RHILW</name>
<protein>
    <recommendedName>
        <fullName evidence="1">UPF0303 protein Rleg2_2653</fullName>
    </recommendedName>
</protein>
<proteinExistence type="inferred from homology"/>
<evidence type="ECO:0000255" key="1">
    <source>
        <dbReference type="HAMAP-Rule" id="MF_00761"/>
    </source>
</evidence>
<feature type="chain" id="PRO_1000198328" description="UPF0303 protein Rleg2_2653">
    <location>
        <begin position="1"/>
        <end position="165"/>
    </location>
</feature>
<dbReference type="EMBL" id="CP001191">
    <property type="protein sequence ID" value="ACI55924.1"/>
    <property type="molecule type" value="Genomic_DNA"/>
</dbReference>
<dbReference type="RefSeq" id="WP_003593272.1">
    <property type="nucleotide sequence ID" value="NC_011369.1"/>
</dbReference>
<dbReference type="SMR" id="B5ZXA0"/>
<dbReference type="STRING" id="395492.Rleg2_2653"/>
<dbReference type="KEGG" id="rlt:Rleg2_2653"/>
<dbReference type="eggNOG" id="COG4702">
    <property type="taxonomic scope" value="Bacteria"/>
</dbReference>
<dbReference type="HOGENOM" id="CLU_101036_2_1_5"/>
<dbReference type="Proteomes" id="UP000008330">
    <property type="component" value="Chromosome"/>
</dbReference>
<dbReference type="Gene3D" id="3.30.450.150">
    <property type="entry name" value="Haem-degrading domain"/>
    <property type="match status" value="1"/>
</dbReference>
<dbReference type="HAMAP" id="MF_00761">
    <property type="entry name" value="UPF0303"/>
    <property type="match status" value="1"/>
</dbReference>
<dbReference type="InterPro" id="IPR005624">
    <property type="entry name" value="PduO/GlcC-like"/>
</dbReference>
<dbReference type="InterPro" id="IPR038084">
    <property type="entry name" value="PduO/GlcC-like_sf"/>
</dbReference>
<dbReference type="InterPro" id="IPR010371">
    <property type="entry name" value="YBR137W-like"/>
</dbReference>
<dbReference type="NCBIfam" id="NF002696">
    <property type="entry name" value="PRK02487.1-5"/>
    <property type="match status" value="1"/>
</dbReference>
<dbReference type="PANTHER" id="PTHR28255">
    <property type="match status" value="1"/>
</dbReference>
<dbReference type="PANTHER" id="PTHR28255:SF1">
    <property type="entry name" value="UPF0303 PROTEIN YBR137W"/>
    <property type="match status" value="1"/>
</dbReference>
<dbReference type="Pfam" id="PF03928">
    <property type="entry name" value="HbpS-like"/>
    <property type="match status" value="1"/>
</dbReference>
<dbReference type="PIRSF" id="PIRSF008757">
    <property type="entry name" value="UCP008757"/>
    <property type="match status" value="1"/>
</dbReference>
<dbReference type="SUPFAM" id="SSF143744">
    <property type="entry name" value="GlcG-like"/>
    <property type="match status" value="1"/>
</dbReference>
<accession>B5ZXA0</accession>
<keyword id="KW-1185">Reference proteome</keyword>